<keyword id="KW-0456">Lyase</keyword>
<keyword id="KW-0479">Metal-binding</keyword>
<keyword id="KW-0671">Queuosine biosynthesis</keyword>
<keyword id="KW-1185">Reference proteome</keyword>
<keyword id="KW-0862">Zinc</keyword>
<organism>
    <name type="scientific">Synechocystis sp. (strain ATCC 27184 / PCC 6803 / Kazusa)</name>
    <dbReference type="NCBI Taxonomy" id="1111708"/>
    <lineage>
        <taxon>Bacteria</taxon>
        <taxon>Bacillati</taxon>
        <taxon>Cyanobacteriota</taxon>
        <taxon>Cyanophyceae</taxon>
        <taxon>Synechococcales</taxon>
        <taxon>Merismopediaceae</taxon>
        <taxon>Synechocystis</taxon>
    </lineage>
</organism>
<comment type="function">
    <text evidence="1">Catalyzes the conversion of 7,8-dihydroneopterin triphosphate (H2NTP) to 6-carboxy-5,6,7,8-tetrahydropterin (CPH4) and acetaldehyde.</text>
</comment>
<comment type="catalytic activity">
    <reaction>
        <text>7,8-dihydroneopterin 3'-triphosphate + H2O = 6-carboxy-5,6,7,8-tetrahydropterin + triphosphate + acetaldehyde + 2 H(+)</text>
        <dbReference type="Rhea" id="RHEA:27966"/>
        <dbReference type="ChEBI" id="CHEBI:15343"/>
        <dbReference type="ChEBI" id="CHEBI:15377"/>
        <dbReference type="ChEBI" id="CHEBI:15378"/>
        <dbReference type="ChEBI" id="CHEBI:18036"/>
        <dbReference type="ChEBI" id="CHEBI:58462"/>
        <dbReference type="ChEBI" id="CHEBI:61032"/>
        <dbReference type="EC" id="4.1.2.50"/>
    </reaction>
</comment>
<comment type="cofactor">
    <cofactor evidence="1">
        <name>Zn(2+)</name>
        <dbReference type="ChEBI" id="CHEBI:29105"/>
    </cofactor>
    <text evidence="1">Binds 1 zinc ion per subunit.</text>
</comment>
<comment type="pathway">
    <text>Purine metabolism; 7-cyano-7-deazaguanine biosynthesis.</text>
</comment>
<comment type="miscellaneous">
    <text evidence="1">The active site is at the interface between 2 subunits. The proton acceptor Cys is on one subunit, and the charge relay system is on the other subunit (By similarity).</text>
</comment>
<comment type="similarity">
    <text evidence="2">Belongs to the PTPS family. QueD subfamily.</text>
</comment>
<gene>
    <name type="primary">queD</name>
    <name type="ordered locus">slr0078</name>
</gene>
<feature type="chain" id="PRO_0000057929" description="6-carboxy-5,6,7,8-tetrahydropterin synthase">
    <location>
        <begin position="1"/>
        <end position="129"/>
    </location>
</feature>
<feature type="active site" description="Proton acceptor" evidence="1">
    <location>
        <position position="23"/>
    </location>
</feature>
<feature type="active site" description="Charge relay system" evidence="1">
    <location>
        <position position="72"/>
    </location>
</feature>
<feature type="active site" description="Charge relay system" evidence="1">
    <location>
        <position position="112"/>
    </location>
</feature>
<feature type="binding site" evidence="1">
    <location>
        <position position="14"/>
    </location>
    <ligand>
        <name>Zn(2+)</name>
        <dbReference type="ChEBI" id="CHEBI:29105"/>
    </ligand>
</feature>
<feature type="binding site" evidence="1">
    <location>
        <position position="27"/>
    </location>
    <ligand>
        <name>Zn(2+)</name>
        <dbReference type="ChEBI" id="CHEBI:29105"/>
    </ligand>
</feature>
<feature type="binding site" evidence="1">
    <location>
        <position position="29"/>
    </location>
    <ligand>
        <name>Zn(2+)</name>
        <dbReference type="ChEBI" id="CHEBI:29105"/>
    </ligand>
</feature>
<accession>Q55798</accession>
<reference key="1">
    <citation type="journal article" date="1995" name="DNA Res.">
        <title>Sequence analysis of the genome of the unicellular cyanobacterium Synechocystis sp. strain PCC6803. I. Sequence features in the 1 Mb region from map positions 64% to 92% of the genome.</title>
        <authorList>
            <person name="Kaneko T."/>
            <person name="Tanaka A."/>
            <person name="Sato S."/>
            <person name="Kotani H."/>
            <person name="Sazuka T."/>
            <person name="Miyajima N."/>
            <person name="Sugiura M."/>
            <person name="Tabata S."/>
        </authorList>
    </citation>
    <scope>NUCLEOTIDE SEQUENCE [LARGE SCALE GENOMIC DNA]</scope>
    <source>
        <strain>ATCC 27184 / PCC 6803 / N-1</strain>
    </source>
</reference>
<reference key="2">
    <citation type="journal article" date="1996" name="DNA Res.">
        <title>Sequence analysis of the genome of the unicellular cyanobacterium Synechocystis sp. strain PCC6803. II. Sequence determination of the entire genome and assignment of potential protein-coding regions.</title>
        <authorList>
            <person name="Kaneko T."/>
            <person name="Sato S."/>
            <person name="Kotani H."/>
            <person name="Tanaka A."/>
            <person name="Asamizu E."/>
            <person name="Nakamura Y."/>
            <person name="Miyajima N."/>
            <person name="Hirosawa M."/>
            <person name="Sugiura M."/>
            <person name="Sasamoto S."/>
            <person name="Kimura T."/>
            <person name="Hosouchi T."/>
            <person name="Matsuno A."/>
            <person name="Muraki A."/>
            <person name="Nakazaki N."/>
            <person name="Naruo K."/>
            <person name="Okumura S."/>
            <person name="Shimpo S."/>
            <person name="Takeuchi C."/>
            <person name="Wada T."/>
            <person name="Watanabe A."/>
            <person name="Yamada M."/>
            <person name="Yasuda M."/>
            <person name="Tabata S."/>
        </authorList>
    </citation>
    <scope>NUCLEOTIDE SEQUENCE [LARGE SCALE GENOMIC DNA]</scope>
    <source>
        <strain>ATCC 27184 / PCC 6803 / Kazusa</strain>
    </source>
</reference>
<name>QUED_SYNY3</name>
<dbReference type="EC" id="4.1.2.50"/>
<dbReference type="EMBL" id="BA000022">
    <property type="protein sequence ID" value="BAA10550.1"/>
    <property type="molecule type" value="Genomic_DNA"/>
</dbReference>
<dbReference type="PIR" id="S76606">
    <property type="entry name" value="S76606"/>
</dbReference>
<dbReference type="SMR" id="Q55798"/>
<dbReference type="STRING" id="1148.gene:10500054"/>
<dbReference type="PaxDb" id="1148-1001713"/>
<dbReference type="EnsemblBacteria" id="BAA10550">
    <property type="protein sequence ID" value="BAA10550"/>
    <property type="gene ID" value="BAA10550"/>
</dbReference>
<dbReference type="KEGG" id="syn:slr0078"/>
<dbReference type="eggNOG" id="COG0720">
    <property type="taxonomic scope" value="Bacteria"/>
</dbReference>
<dbReference type="InParanoid" id="Q55798"/>
<dbReference type="PhylomeDB" id="Q55798"/>
<dbReference type="UniPathway" id="UPA00391"/>
<dbReference type="Proteomes" id="UP000001425">
    <property type="component" value="Chromosome"/>
</dbReference>
<dbReference type="GO" id="GO:0070497">
    <property type="term" value="F:6-carboxytetrahydropterin synthase activity"/>
    <property type="evidence" value="ECO:0007669"/>
    <property type="project" value="UniProtKB-EC"/>
</dbReference>
<dbReference type="GO" id="GO:0046872">
    <property type="term" value="F:metal ion binding"/>
    <property type="evidence" value="ECO:0007669"/>
    <property type="project" value="UniProtKB-KW"/>
</dbReference>
<dbReference type="GO" id="GO:0008616">
    <property type="term" value="P:queuosine biosynthetic process"/>
    <property type="evidence" value="ECO:0007669"/>
    <property type="project" value="UniProtKB-KW"/>
</dbReference>
<dbReference type="Gene3D" id="3.30.479.10">
    <property type="entry name" value="6-pyruvoyl tetrahydropterin synthase/QueD"/>
    <property type="match status" value="1"/>
</dbReference>
<dbReference type="InterPro" id="IPR007115">
    <property type="entry name" value="6-PTP_synth/QueD"/>
</dbReference>
<dbReference type="InterPro" id="IPR038418">
    <property type="entry name" value="6-PTP_synth/QueD_sf"/>
</dbReference>
<dbReference type="NCBIfam" id="TIGR00039">
    <property type="entry name" value="6PTHBS"/>
    <property type="match status" value="1"/>
</dbReference>
<dbReference type="NCBIfam" id="TIGR03367">
    <property type="entry name" value="queuosine_QueD"/>
    <property type="match status" value="1"/>
</dbReference>
<dbReference type="PANTHER" id="PTHR12589:SF7">
    <property type="entry name" value="6-PYRUVOYL TETRAHYDROBIOPTERIN SYNTHASE"/>
    <property type="match status" value="1"/>
</dbReference>
<dbReference type="PANTHER" id="PTHR12589">
    <property type="entry name" value="PYRUVOYL TETRAHYDROBIOPTERIN SYNTHASE"/>
    <property type="match status" value="1"/>
</dbReference>
<dbReference type="Pfam" id="PF01242">
    <property type="entry name" value="PTPS"/>
    <property type="match status" value="1"/>
</dbReference>
<dbReference type="PIRSF" id="PIRSF006113">
    <property type="entry name" value="PTP_synth"/>
    <property type="match status" value="1"/>
</dbReference>
<dbReference type="SUPFAM" id="SSF55620">
    <property type="entry name" value="Tetrahydrobiopterin biosynthesis enzymes-like"/>
    <property type="match status" value="1"/>
</dbReference>
<sequence>MWIIYKEFSFEAAHQLPHHEGKCRRLHGHSFRGRVYVASDRLKTTGSETGMVMDFSVLKAHLDPLVKNHLDHYYLNDSLGLESPTSEAIAAWIFAKLEEAGVPGLHSVEVLETCTSAARYFSPRLSPLL</sequence>
<evidence type="ECO:0000250" key="1"/>
<evidence type="ECO:0000305" key="2"/>
<proteinExistence type="inferred from homology"/>
<protein>
    <recommendedName>
        <fullName>6-carboxy-5,6,7,8-tetrahydropterin synthase</fullName>
        <shortName>CPH4 synthase</shortName>
        <ecNumber>4.1.2.50</ecNumber>
    </recommendedName>
    <alternativeName>
        <fullName>Queuosine biosynthesis protein QueD</fullName>
    </alternativeName>
</protein>